<keyword id="KW-0067">ATP-binding</keyword>
<keyword id="KW-0418">Kinase</keyword>
<keyword id="KW-0547">Nucleotide-binding</keyword>
<keyword id="KW-0597">Phosphoprotein</keyword>
<keyword id="KW-1185">Reference proteome</keyword>
<keyword id="KW-0677">Repeat</keyword>
<keyword id="KW-0723">Serine/threonine-protein kinase</keyword>
<keyword id="KW-0808">Transferase</keyword>
<comment type="catalytic activity">
    <reaction evidence="1">
        <text>L-seryl-[protein] + ATP = O-phospho-L-seryl-[protein] + ADP + H(+)</text>
        <dbReference type="Rhea" id="RHEA:17989"/>
        <dbReference type="Rhea" id="RHEA-COMP:9863"/>
        <dbReference type="Rhea" id="RHEA-COMP:11604"/>
        <dbReference type="ChEBI" id="CHEBI:15378"/>
        <dbReference type="ChEBI" id="CHEBI:29999"/>
        <dbReference type="ChEBI" id="CHEBI:30616"/>
        <dbReference type="ChEBI" id="CHEBI:83421"/>
        <dbReference type="ChEBI" id="CHEBI:456216"/>
        <dbReference type="EC" id="2.7.11.1"/>
    </reaction>
</comment>
<comment type="catalytic activity">
    <reaction evidence="1">
        <text>L-threonyl-[protein] + ATP = O-phospho-L-threonyl-[protein] + ADP + H(+)</text>
        <dbReference type="Rhea" id="RHEA:46608"/>
        <dbReference type="Rhea" id="RHEA-COMP:11060"/>
        <dbReference type="Rhea" id="RHEA-COMP:11605"/>
        <dbReference type="ChEBI" id="CHEBI:15378"/>
        <dbReference type="ChEBI" id="CHEBI:30013"/>
        <dbReference type="ChEBI" id="CHEBI:30616"/>
        <dbReference type="ChEBI" id="CHEBI:61977"/>
        <dbReference type="ChEBI" id="CHEBI:456216"/>
        <dbReference type="EC" id="2.7.11.1"/>
    </reaction>
</comment>
<comment type="similarity">
    <text evidence="3">Belongs to the protein kinase superfamily. CAMK Ser/Thr protein kinase family. CaMK subfamily.</text>
</comment>
<organism>
    <name type="scientific">Drosophila persimilis</name>
    <name type="common">Fruit fly</name>
    <dbReference type="NCBI Taxonomy" id="7234"/>
    <lineage>
        <taxon>Eukaryota</taxon>
        <taxon>Metazoa</taxon>
        <taxon>Ecdysozoa</taxon>
        <taxon>Arthropoda</taxon>
        <taxon>Hexapoda</taxon>
        <taxon>Insecta</taxon>
        <taxon>Pterygota</taxon>
        <taxon>Neoptera</taxon>
        <taxon>Endopterygota</taxon>
        <taxon>Diptera</taxon>
        <taxon>Brachycera</taxon>
        <taxon>Muscomorpha</taxon>
        <taxon>Ephydroidea</taxon>
        <taxon>Drosophilidae</taxon>
        <taxon>Drosophila</taxon>
        <taxon>Sophophora</taxon>
    </lineage>
</organism>
<gene>
    <name type="ORF">GL21140</name>
</gene>
<sequence length="755" mass="82227">MEVHNSLHCTAPVLSSLQASASGSGTPKKTAASSAAAQNSKQLLDQLSQQQKAQEEAETHSRRDCDSPASSNSEPEKDLDELRDLNGSLTGSGSVGKSNGSLSGASSTTSAPAGTSTPGSANTNGSASGAASLSVVSATAHLKKRITSSRTPTRKAHRIKFYRNGDRFYPGITIPVSNERYRSFESLYEDLTRLLEENVKIPGAVRTIYDMVGKKITALEELEDGQSYVCSCNNENFKKVDYNTSSQPLANLTLANNSRTSSHRLAKLQRPASPLKNGVPNSIAPVPVGGGAAANGSPLNTSRFSERDSVVHPRIVTLIRNGTKPRRIIRLLLNKRNSPSFDHVLTAITQVVRLDTGYVRKVFTLSGVSVLQLSDFFGSDDVFFAYGTERVNTVDDFKLESEEQRAINAIRKTLRTAGTACKGPKPKMPVKSKKAYPPGELKAQAEAQLQASAAPANEDEEQAALLKSTGVEVAELPAAIRDNYTLSQIIGDGNFAIVLKIKDRQTGIPHALKIIDKSKCKGKEHYIDAEVRVMKKLHHPHIISLIMDVDQDTNMYLVLEYVSGGDLFDAITQVTRFSESQSRIMIRHLGSAMSYLHSMGIVHRDIKPENLLVELDDFGNVVQLKLADFGLACEVTEPLYAVCGTPTYVAPEILLEVGYGLKIDVWAAGIILYILLCGFPPFVAPDNQQEPLFDAIISGVYEFPDPYWSDIGDGVRDLIANMLQSDPDVRFTSEDILDHYWTMGNEEIGCGDYSR</sequence>
<proteinExistence type="inferred from homology"/>
<dbReference type="EC" id="2.7.11.1"/>
<dbReference type="EMBL" id="CH479195">
    <property type="protein sequence ID" value="EDW27233.1"/>
    <property type="molecule type" value="Genomic_DNA"/>
</dbReference>
<dbReference type="SMR" id="B4GXC2"/>
<dbReference type="STRING" id="7234.B4GXC2"/>
<dbReference type="EnsemblMetazoa" id="FBtr0186755">
    <property type="protein sequence ID" value="FBpp0185247"/>
    <property type="gene ID" value="FBgn0158734"/>
</dbReference>
<dbReference type="EnsemblMetazoa" id="XM_002023069.2">
    <property type="protein sequence ID" value="XP_002023105.1"/>
    <property type="gene ID" value="LOC6597935"/>
</dbReference>
<dbReference type="EnsemblMetazoa" id="XM_026987204.1">
    <property type="protein sequence ID" value="XP_026843005.1"/>
    <property type="gene ID" value="LOC6597935"/>
</dbReference>
<dbReference type="GeneID" id="6597935"/>
<dbReference type="KEGG" id="dpe:6597935"/>
<dbReference type="eggNOG" id="KOG0032">
    <property type="taxonomic scope" value="Eukaryota"/>
</dbReference>
<dbReference type="eggNOG" id="KOG3757">
    <property type="taxonomic scope" value="Eukaryota"/>
</dbReference>
<dbReference type="HOGENOM" id="CLU_000288_94_1_1"/>
<dbReference type="OMA" id="LMTECKV"/>
<dbReference type="OrthoDB" id="1738954at2759"/>
<dbReference type="PhylomeDB" id="B4GXC2"/>
<dbReference type="Proteomes" id="UP000008744">
    <property type="component" value="Unassembled WGS sequence"/>
</dbReference>
<dbReference type="GO" id="GO:0005524">
    <property type="term" value="F:ATP binding"/>
    <property type="evidence" value="ECO:0007669"/>
    <property type="project" value="UniProtKB-KW"/>
</dbReference>
<dbReference type="GO" id="GO:0106310">
    <property type="term" value="F:protein serine kinase activity"/>
    <property type="evidence" value="ECO:0007669"/>
    <property type="project" value="RHEA"/>
</dbReference>
<dbReference type="GO" id="GO:0004674">
    <property type="term" value="F:protein serine/threonine kinase activity"/>
    <property type="evidence" value="ECO:0000250"/>
    <property type="project" value="UniProtKB"/>
</dbReference>
<dbReference type="GO" id="GO:0035556">
    <property type="term" value="P:intracellular signal transduction"/>
    <property type="evidence" value="ECO:0007669"/>
    <property type="project" value="InterPro"/>
</dbReference>
<dbReference type="CDD" id="cd16109">
    <property type="entry name" value="DCX1"/>
    <property type="match status" value="1"/>
</dbReference>
<dbReference type="CDD" id="cd17069">
    <property type="entry name" value="DCX2"/>
    <property type="match status" value="1"/>
</dbReference>
<dbReference type="FunFam" id="3.30.200.20:FF:000042">
    <property type="entry name" value="Aurora kinase A"/>
    <property type="match status" value="1"/>
</dbReference>
<dbReference type="FunFam" id="1.10.510.10:FF:000866">
    <property type="entry name" value="Serine/threonine-protein kinase GA29083"/>
    <property type="match status" value="1"/>
</dbReference>
<dbReference type="FunFam" id="3.10.20.230:FF:000017">
    <property type="entry name" value="Serine/threonine-protein kinase GA29083"/>
    <property type="match status" value="1"/>
</dbReference>
<dbReference type="FunFam" id="3.10.20.230:FF:000021">
    <property type="entry name" value="Serine/threonine-protein kinase GA29083"/>
    <property type="match status" value="1"/>
</dbReference>
<dbReference type="Gene3D" id="3.10.20.230">
    <property type="entry name" value="Doublecortin domain"/>
    <property type="match status" value="2"/>
</dbReference>
<dbReference type="Gene3D" id="1.10.510.10">
    <property type="entry name" value="Transferase(Phosphotransferase) domain 1"/>
    <property type="match status" value="1"/>
</dbReference>
<dbReference type="InterPro" id="IPR003533">
    <property type="entry name" value="Doublecortin_dom"/>
</dbReference>
<dbReference type="InterPro" id="IPR036572">
    <property type="entry name" value="Doublecortin_dom_sf"/>
</dbReference>
<dbReference type="InterPro" id="IPR011009">
    <property type="entry name" value="Kinase-like_dom_sf"/>
</dbReference>
<dbReference type="InterPro" id="IPR000719">
    <property type="entry name" value="Prot_kinase_dom"/>
</dbReference>
<dbReference type="InterPro" id="IPR008271">
    <property type="entry name" value="Ser/Thr_kinase_AS"/>
</dbReference>
<dbReference type="PANTHER" id="PTHR24347">
    <property type="entry name" value="SERINE/THREONINE-PROTEIN KINASE"/>
    <property type="match status" value="1"/>
</dbReference>
<dbReference type="Pfam" id="PF03607">
    <property type="entry name" value="DCX"/>
    <property type="match status" value="2"/>
</dbReference>
<dbReference type="Pfam" id="PF00069">
    <property type="entry name" value="Pkinase"/>
    <property type="match status" value="1"/>
</dbReference>
<dbReference type="SMART" id="SM00537">
    <property type="entry name" value="DCX"/>
    <property type="match status" value="2"/>
</dbReference>
<dbReference type="SMART" id="SM00220">
    <property type="entry name" value="S_TKc"/>
    <property type="match status" value="1"/>
</dbReference>
<dbReference type="SUPFAM" id="SSF89837">
    <property type="entry name" value="Doublecortin (DC)"/>
    <property type="match status" value="2"/>
</dbReference>
<dbReference type="SUPFAM" id="SSF56112">
    <property type="entry name" value="Protein kinase-like (PK-like)"/>
    <property type="match status" value="1"/>
</dbReference>
<dbReference type="PROSITE" id="PS50309">
    <property type="entry name" value="DC"/>
    <property type="match status" value="2"/>
</dbReference>
<dbReference type="PROSITE" id="PS50011">
    <property type="entry name" value="PROTEIN_KINASE_DOM"/>
    <property type="match status" value="1"/>
</dbReference>
<dbReference type="PROSITE" id="PS00108">
    <property type="entry name" value="PROTEIN_KINASE_ST"/>
    <property type="match status" value="1"/>
</dbReference>
<evidence type="ECO:0000250" key="1">
    <source>
        <dbReference type="UniProtKB" id="P28523"/>
    </source>
</evidence>
<evidence type="ECO:0000250" key="2">
    <source>
        <dbReference type="UniProtKB" id="Q7PLI7"/>
    </source>
</evidence>
<evidence type="ECO:0000255" key="3"/>
<evidence type="ECO:0000255" key="4">
    <source>
        <dbReference type="PROSITE-ProRule" id="PRU00072"/>
    </source>
</evidence>
<evidence type="ECO:0000255" key="5">
    <source>
        <dbReference type="PROSITE-ProRule" id="PRU00159"/>
    </source>
</evidence>
<evidence type="ECO:0000255" key="6">
    <source>
        <dbReference type="PROSITE-ProRule" id="PRU10027"/>
    </source>
</evidence>
<evidence type="ECO:0000256" key="7">
    <source>
        <dbReference type="SAM" id="MobiDB-lite"/>
    </source>
</evidence>
<evidence type="ECO:0000312" key="8">
    <source>
        <dbReference type="EMBL" id="EDW27233.1"/>
    </source>
</evidence>
<protein>
    <recommendedName>
        <fullName evidence="2 8">Serine/threonine-protein kinase GL21140</fullName>
        <ecNumber>2.7.11.1</ecNumber>
    </recommendedName>
    <alternativeName>
        <fullName>Doublecortin-like and CAM kinase-like protein</fullName>
    </alternativeName>
</protein>
<feature type="chain" id="PRO_0000392568" description="Serine/threonine-protein kinase GL21140">
    <location>
        <begin position="1"/>
        <end position="755"/>
    </location>
</feature>
<feature type="domain" description="Doublecortin 1" evidence="4">
    <location>
        <begin position="157"/>
        <end position="243"/>
    </location>
</feature>
<feature type="domain" description="Doublecortin 2" evidence="4">
    <location>
        <begin position="314"/>
        <end position="397"/>
    </location>
</feature>
<feature type="domain" description="Protein kinase" evidence="5">
    <location>
        <begin position="484"/>
        <end position="742"/>
    </location>
</feature>
<feature type="region of interest" description="Disordered" evidence="7">
    <location>
        <begin position="18"/>
        <end position="128"/>
    </location>
</feature>
<feature type="compositionally biased region" description="Low complexity" evidence="7">
    <location>
        <begin position="18"/>
        <end position="52"/>
    </location>
</feature>
<feature type="compositionally biased region" description="Basic and acidic residues" evidence="7">
    <location>
        <begin position="53"/>
        <end position="66"/>
    </location>
</feature>
<feature type="compositionally biased region" description="Basic and acidic residues" evidence="7">
    <location>
        <begin position="74"/>
        <end position="84"/>
    </location>
</feature>
<feature type="compositionally biased region" description="Polar residues" evidence="7">
    <location>
        <begin position="87"/>
        <end position="99"/>
    </location>
</feature>
<feature type="compositionally biased region" description="Low complexity" evidence="7">
    <location>
        <begin position="100"/>
        <end position="128"/>
    </location>
</feature>
<feature type="active site" description="Proton acceptor" evidence="1 5 6">
    <location>
        <position position="605"/>
    </location>
</feature>
<feature type="binding site" evidence="1 5">
    <location>
        <begin position="490"/>
        <end position="498"/>
    </location>
    <ligand>
        <name>ATP</name>
        <dbReference type="ChEBI" id="CHEBI:30616"/>
    </ligand>
</feature>
<feature type="binding site" evidence="1 5">
    <location>
        <position position="513"/>
    </location>
    <ligand>
        <name>ATP</name>
        <dbReference type="ChEBI" id="CHEBI:30616"/>
    </ligand>
</feature>
<accession>B4GXC2</accession>
<reference evidence="8" key="1">
    <citation type="journal article" date="2007" name="Nature">
        <title>Evolution of genes and genomes on the Drosophila phylogeny.</title>
        <authorList>
            <consortium name="Drosophila 12 genomes consortium"/>
        </authorList>
    </citation>
    <scope>NUCLEOTIDE SEQUENCE [LARGE SCALE GENOMIC DNA]</scope>
    <source>
        <strain>MSH-3 / Tucson 14011-0111.49</strain>
    </source>
</reference>
<name>DCLK_DROPE</name>